<dbReference type="EC" id="1.1.1.94" evidence="1"/>
<dbReference type="EMBL" id="BX897699">
    <property type="protein sequence ID" value="CAF26941.1"/>
    <property type="molecule type" value="Genomic_DNA"/>
</dbReference>
<dbReference type="RefSeq" id="WP_011180083.1">
    <property type="nucleotide sequence ID" value="NZ_LRIJ02000001.1"/>
</dbReference>
<dbReference type="SMR" id="Q6G518"/>
<dbReference type="PaxDb" id="283166-BH01260"/>
<dbReference type="EnsemblBacteria" id="CAF26941">
    <property type="protein sequence ID" value="CAF26941"/>
    <property type="gene ID" value="BH01260"/>
</dbReference>
<dbReference type="GeneID" id="92986409"/>
<dbReference type="KEGG" id="bhe:BH01260"/>
<dbReference type="eggNOG" id="COG0240">
    <property type="taxonomic scope" value="Bacteria"/>
</dbReference>
<dbReference type="OrthoDB" id="9812273at2"/>
<dbReference type="UniPathway" id="UPA00940"/>
<dbReference type="Proteomes" id="UP000000421">
    <property type="component" value="Chromosome"/>
</dbReference>
<dbReference type="GO" id="GO:0005829">
    <property type="term" value="C:cytosol"/>
    <property type="evidence" value="ECO:0007669"/>
    <property type="project" value="TreeGrafter"/>
</dbReference>
<dbReference type="GO" id="GO:0047952">
    <property type="term" value="F:glycerol-3-phosphate dehydrogenase [NAD(P)+] activity"/>
    <property type="evidence" value="ECO:0007669"/>
    <property type="project" value="UniProtKB-UniRule"/>
</dbReference>
<dbReference type="GO" id="GO:0051287">
    <property type="term" value="F:NAD binding"/>
    <property type="evidence" value="ECO:0007669"/>
    <property type="project" value="InterPro"/>
</dbReference>
<dbReference type="GO" id="GO:0005975">
    <property type="term" value="P:carbohydrate metabolic process"/>
    <property type="evidence" value="ECO:0007669"/>
    <property type="project" value="InterPro"/>
</dbReference>
<dbReference type="GO" id="GO:0046167">
    <property type="term" value="P:glycerol-3-phosphate biosynthetic process"/>
    <property type="evidence" value="ECO:0007669"/>
    <property type="project" value="UniProtKB-UniRule"/>
</dbReference>
<dbReference type="GO" id="GO:0046168">
    <property type="term" value="P:glycerol-3-phosphate catabolic process"/>
    <property type="evidence" value="ECO:0007669"/>
    <property type="project" value="InterPro"/>
</dbReference>
<dbReference type="GO" id="GO:0046474">
    <property type="term" value="P:glycerophospholipid biosynthetic process"/>
    <property type="evidence" value="ECO:0007669"/>
    <property type="project" value="TreeGrafter"/>
</dbReference>
<dbReference type="FunFam" id="1.10.1040.10:FF:000001">
    <property type="entry name" value="Glycerol-3-phosphate dehydrogenase [NAD(P)+]"/>
    <property type="match status" value="1"/>
</dbReference>
<dbReference type="FunFam" id="3.40.50.720:FF:000019">
    <property type="entry name" value="Glycerol-3-phosphate dehydrogenase [NAD(P)+]"/>
    <property type="match status" value="1"/>
</dbReference>
<dbReference type="Gene3D" id="1.10.1040.10">
    <property type="entry name" value="N-(1-d-carboxylethyl)-l-norvaline Dehydrogenase, domain 2"/>
    <property type="match status" value="1"/>
</dbReference>
<dbReference type="Gene3D" id="3.40.50.720">
    <property type="entry name" value="NAD(P)-binding Rossmann-like Domain"/>
    <property type="match status" value="1"/>
</dbReference>
<dbReference type="HAMAP" id="MF_00394">
    <property type="entry name" value="NAD_Glyc3P_dehydrog"/>
    <property type="match status" value="1"/>
</dbReference>
<dbReference type="InterPro" id="IPR008927">
    <property type="entry name" value="6-PGluconate_DH-like_C_sf"/>
</dbReference>
<dbReference type="InterPro" id="IPR013328">
    <property type="entry name" value="6PGD_dom2"/>
</dbReference>
<dbReference type="InterPro" id="IPR006168">
    <property type="entry name" value="G3P_DH_NAD-dep"/>
</dbReference>
<dbReference type="InterPro" id="IPR006109">
    <property type="entry name" value="G3P_DH_NAD-dep_C"/>
</dbReference>
<dbReference type="InterPro" id="IPR011128">
    <property type="entry name" value="G3P_DH_NAD-dep_N"/>
</dbReference>
<dbReference type="InterPro" id="IPR036291">
    <property type="entry name" value="NAD(P)-bd_dom_sf"/>
</dbReference>
<dbReference type="NCBIfam" id="NF000939">
    <property type="entry name" value="PRK00094.1-1"/>
    <property type="match status" value="1"/>
</dbReference>
<dbReference type="NCBIfam" id="NF000940">
    <property type="entry name" value="PRK00094.1-2"/>
    <property type="match status" value="1"/>
</dbReference>
<dbReference type="NCBIfam" id="NF000942">
    <property type="entry name" value="PRK00094.1-4"/>
    <property type="match status" value="1"/>
</dbReference>
<dbReference type="PANTHER" id="PTHR11728">
    <property type="entry name" value="GLYCEROL-3-PHOSPHATE DEHYDROGENASE"/>
    <property type="match status" value="1"/>
</dbReference>
<dbReference type="PANTHER" id="PTHR11728:SF1">
    <property type="entry name" value="GLYCEROL-3-PHOSPHATE DEHYDROGENASE [NAD(+)] 2, CHLOROPLASTIC"/>
    <property type="match status" value="1"/>
</dbReference>
<dbReference type="Pfam" id="PF07479">
    <property type="entry name" value="NAD_Gly3P_dh_C"/>
    <property type="match status" value="1"/>
</dbReference>
<dbReference type="Pfam" id="PF01210">
    <property type="entry name" value="NAD_Gly3P_dh_N"/>
    <property type="match status" value="1"/>
</dbReference>
<dbReference type="PIRSF" id="PIRSF000114">
    <property type="entry name" value="Glycerol-3-P_dh"/>
    <property type="match status" value="1"/>
</dbReference>
<dbReference type="PRINTS" id="PR00077">
    <property type="entry name" value="GPDHDRGNASE"/>
</dbReference>
<dbReference type="SUPFAM" id="SSF48179">
    <property type="entry name" value="6-phosphogluconate dehydrogenase C-terminal domain-like"/>
    <property type="match status" value="1"/>
</dbReference>
<dbReference type="SUPFAM" id="SSF51735">
    <property type="entry name" value="NAD(P)-binding Rossmann-fold domains"/>
    <property type="match status" value="1"/>
</dbReference>
<dbReference type="PROSITE" id="PS00957">
    <property type="entry name" value="NAD_G3PDH"/>
    <property type="match status" value="1"/>
</dbReference>
<organism>
    <name type="scientific">Bartonella henselae (strain ATCC 49882 / DSM 28221 / CCUG 30454 / Houston 1)</name>
    <name type="common">Rochalimaea henselae</name>
    <dbReference type="NCBI Taxonomy" id="283166"/>
    <lineage>
        <taxon>Bacteria</taxon>
        <taxon>Pseudomonadati</taxon>
        <taxon>Pseudomonadota</taxon>
        <taxon>Alphaproteobacteria</taxon>
        <taxon>Hyphomicrobiales</taxon>
        <taxon>Bartonellaceae</taxon>
        <taxon>Bartonella</taxon>
    </lineage>
</organism>
<reference key="1">
    <citation type="journal article" date="2004" name="Proc. Natl. Acad. Sci. U.S.A.">
        <title>The louse-borne human pathogen Bartonella quintana is a genomic derivative of the zoonotic agent Bartonella henselae.</title>
        <authorList>
            <person name="Alsmark U.C.M."/>
            <person name="Frank A.C."/>
            <person name="Karlberg E.O."/>
            <person name="Legault B.-A."/>
            <person name="Ardell D.H."/>
            <person name="Canbaeck B."/>
            <person name="Eriksson A.-S."/>
            <person name="Naeslund A.K."/>
            <person name="Handley S.A."/>
            <person name="Huvet M."/>
            <person name="La Scola B."/>
            <person name="Holmberg M."/>
            <person name="Andersson S.G.E."/>
        </authorList>
    </citation>
    <scope>NUCLEOTIDE SEQUENCE [LARGE SCALE GENOMIC DNA]</scope>
    <source>
        <strain>ATCC 49882 / DSM 28221 / CCUG 30454 / Houston 1</strain>
    </source>
</reference>
<keyword id="KW-0963">Cytoplasm</keyword>
<keyword id="KW-0444">Lipid biosynthesis</keyword>
<keyword id="KW-0443">Lipid metabolism</keyword>
<keyword id="KW-0520">NAD</keyword>
<keyword id="KW-0521">NADP</keyword>
<keyword id="KW-0547">Nucleotide-binding</keyword>
<keyword id="KW-0560">Oxidoreductase</keyword>
<keyword id="KW-0594">Phospholipid biosynthesis</keyword>
<keyword id="KW-1208">Phospholipid metabolism</keyword>
<feature type="chain" id="PRO_0000137927" description="Glycerol-3-phosphate dehydrogenase [NAD(P)+]">
    <location>
        <begin position="1"/>
        <end position="340"/>
    </location>
</feature>
<feature type="active site" description="Proton acceptor" evidence="1">
    <location>
        <position position="193"/>
    </location>
</feature>
<feature type="binding site" evidence="1">
    <location>
        <position position="13"/>
    </location>
    <ligand>
        <name>NADPH</name>
        <dbReference type="ChEBI" id="CHEBI:57783"/>
    </ligand>
</feature>
<feature type="binding site" evidence="1">
    <location>
        <position position="14"/>
    </location>
    <ligand>
        <name>NADPH</name>
        <dbReference type="ChEBI" id="CHEBI:57783"/>
    </ligand>
</feature>
<feature type="binding site" evidence="1">
    <location>
        <position position="108"/>
    </location>
    <ligand>
        <name>NADPH</name>
        <dbReference type="ChEBI" id="CHEBI:57783"/>
    </ligand>
</feature>
<feature type="binding site" evidence="1">
    <location>
        <position position="108"/>
    </location>
    <ligand>
        <name>sn-glycerol 3-phosphate</name>
        <dbReference type="ChEBI" id="CHEBI:57597"/>
    </ligand>
</feature>
<feature type="binding site" evidence="1">
    <location>
        <position position="137"/>
    </location>
    <ligand>
        <name>sn-glycerol 3-phosphate</name>
        <dbReference type="ChEBI" id="CHEBI:57597"/>
    </ligand>
</feature>
<feature type="binding site" evidence="1">
    <location>
        <position position="139"/>
    </location>
    <ligand>
        <name>sn-glycerol 3-phosphate</name>
        <dbReference type="ChEBI" id="CHEBI:57597"/>
    </ligand>
</feature>
<feature type="binding site" evidence="1">
    <location>
        <position position="141"/>
    </location>
    <ligand>
        <name>NADPH</name>
        <dbReference type="ChEBI" id="CHEBI:57783"/>
    </ligand>
</feature>
<feature type="binding site" evidence="1">
    <location>
        <position position="193"/>
    </location>
    <ligand>
        <name>sn-glycerol 3-phosphate</name>
        <dbReference type="ChEBI" id="CHEBI:57597"/>
    </ligand>
</feature>
<feature type="binding site" evidence="1">
    <location>
        <position position="246"/>
    </location>
    <ligand>
        <name>sn-glycerol 3-phosphate</name>
        <dbReference type="ChEBI" id="CHEBI:57597"/>
    </ligand>
</feature>
<feature type="binding site" evidence="1">
    <location>
        <position position="256"/>
    </location>
    <ligand>
        <name>sn-glycerol 3-phosphate</name>
        <dbReference type="ChEBI" id="CHEBI:57597"/>
    </ligand>
</feature>
<feature type="binding site" evidence="1">
    <location>
        <position position="257"/>
    </location>
    <ligand>
        <name>NADPH</name>
        <dbReference type="ChEBI" id="CHEBI:57783"/>
    </ligand>
</feature>
<feature type="binding site" evidence="1">
    <location>
        <position position="257"/>
    </location>
    <ligand>
        <name>sn-glycerol 3-phosphate</name>
        <dbReference type="ChEBI" id="CHEBI:57597"/>
    </ligand>
</feature>
<feature type="binding site" evidence="1">
    <location>
        <position position="258"/>
    </location>
    <ligand>
        <name>sn-glycerol 3-phosphate</name>
        <dbReference type="ChEBI" id="CHEBI:57597"/>
    </ligand>
</feature>
<feature type="binding site" evidence="1">
    <location>
        <position position="281"/>
    </location>
    <ligand>
        <name>NADPH</name>
        <dbReference type="ChEBI" id="CHEBI:57783"/>
    </ligand>
</feature>
<feature type="binding site" evidence="1">
    <location>
        <position position="283"/>
    </location>
    <ligand>
        <name>NADPH</name>
        <dbReference type="ChEBI" id="CHEBI:57783"/>
    </ligand>
</feature>
<gene>
    <name evidence="1" type="primary">gpsA</name>
    <name type="ordered locus">BH01260</name>
</gene>
<comment type="function">
    <text evidence="1">Catalyzes the reduction of the glycolytic intermediate dihydroxyacetone phosphate (DHAP) to sn-glycerol 3-phosphate (G3P), the key precursor for phospholipid synthesis.</text>
</comment>
<comment type="catalytic activity">
    <reaction evidence="1">
        <text>sn-glycerol 3-phosphate + NAD(+) = dihydroxyacetone phosphate + NADH + H(+)</text>
        <dbReference type="Rhea" id="RHEA:11092"/>
        <dbReference type="ChEBI" id="CHEBI:15378"/>
        <dbReference type="ChEBI" id="CHEBI:57540"/>
        <dbReference type="ChEBI" id="CHEBI:57597"/>
        <dbReference type="ChEBI" id="CHEBI:57642"/>
        <dbReference type="ChEBI" id="CHEBI:57945"/>
        <dbReference type="EC" id="1.1.1.94"/>
    </reaction>
    <physiologicalReaction direction="right-to-left" evidence="1">
        <dbReference type="Rhea" id="RHEA:11094"/>
    </physiologicalReaction>
</comment>
<comment type="catalytic activity">
    <reaction evidence="1">
        <text>sn-glycerol 3-phosphate + NADP(+) = dihydroxyacetone phosphate + NADPH + H(+)</text>
        <dbReference type="Rhea" id="RHEA:11096"/>
        <dbReference type="ChEBI" id="CHEBI:15378"/>
        <dbReference type="ChEBI" id="CHEBI:57597"/>
        <dbReference type="ChEBI" id="CHEBI:57642"/>
        <dbReference type="ChEBI" id="CHEBI:57783"/>
        <dbReference type="ChEBI" id="CHEBI:58349"/>
        <dbReference type="EC" id="1.1.1.94"/>
    </reaction>
    <physiologicalReaction direction="right-to-left" evidence="1">
        <dbReference type="Rhea" id="RHEA:11098"/>
    </physiologicalReaction>
</comment>
<comment type="pathway">
    <text evidence="1">Membrane lipid metabolism; glycerophospholipid metabolism.</text>
</comment>
<comment type="subcellular location">
    <subcellularLocation>
        <location evidence="1">Cytoplasm</location>
    </subcellularLocation>
</comment>
<comment type="similarity">
    <text evidence="1">Belongs to the NAD-dependent glycerol-3-phosphate dehydrogenase family.</text>
</comment>
<evidence type="ECO:0000255" key="1">
    <source>
        <dbReference type="HAMAP-Rule" id="MF_00394"/>
    </source>
</evidence>
<proteinExistence type="inferred from homology"/>
<accession>Q6G518</accession>
<name>GPDA_BARHE</name>
<sequence length="340" mass="37514">MHAVSMTIIGAGSYGTALAIVLARNGHHVLLWGYNPQHIRELQEYRCNQAFLPDVQFPDNLCPEDSLETAIKASRNILIAVPSHVFHQVLYNIRPYLDQHSRIIWATKGLEHGTGRLLQEVAREILGDKIPLAVFSGPTFAKELAIGLPTAITIAASDTEFSEELQQLFHFDKSFRVYKNSDMIGVQLGGAVKNVIAIGAGISDGMGFGANARIALITRGLAEISRLGIAMGAELSTFMGMTGLGDLVLTCTDNQSRNRRFGMLLGQGVDIEEAKKQIDQIVEGYLNTKEVHMLAQRIRVEMPITEQIYHVLYCGKSVSEAANALLSRQLKDEMYDTVRF</sequence>
<protein>
    <recommendedName>
        <fullName evidence="1">Glycerol-3-phosphate dehydrogenase [NAD(P)+]</fullName>
        <ecNumber evidence="1">1.1.1.94</ecNumber>
    </recommendedName>
    <alternativeName>
        <fullName evidence="1">NAD(P)(+)-dependent glycerol-3-phosphate dehydrogenase</fullName>
    </alternativeName>
    <alternativeName>
        <fullName evidence="1">NAD(P)H-dependent dihydroxyacetone-phosphate reductase</fullName>
    </alternativeName>
</protein>